<accession>A0A8I3PDQ1</accession>
<accession>A0A8I3P5P7</accession>
<accession>A0A8I3PEK1</accession>
<proteinExistence type="evidence at protein level"/>
<feature type="chain" id="PRO_0000456648" description="Enhancer of filamentation 1">
    <location>
        <begin position="1"/>
        <end position="834"/>
    </location>
</feature>
<feature type="domain" description="SH3" evidence="3">
    <location>
        <begin position="3"/>
        <end position="65"/>
    </location>
</feature>
<feature type="region of interest" description="Disordered" evidence="4">
    <location>
        <begin position="328"/>
        <end position="402"/>
    </location>
</feature>
<feature type="region of interest" description="Disordered" evidence="4">
    <location>
        <begin position="584"/>
        <end position="624"/>
    </location>
</feature>
<feature type="region of interest" description="Required for interaction with PLK1" evidence="2">
    <location>
        <begin position="710"/>
        <end position="834"/>
    </location>
</feature>
<feature type="region of interest" description="Divergent helix-loop-helix motif" evidence="1">
    <location>
        <begin position="710"/>
        <end position="760"/>
    </location>
</feature>
<feature type="short sequence motif" description="Caspase cleavage related site" evidence="2">
    <location>
        <begin position="360"/>
        <end position="363"/>
    </location>
</feature>
<feature type="compositionally biased region" description="Basic and acidic residues" evidence="4">
    <location>
        <begin position="332"/>
        <end position="344"/>
    </location>
</feature>
<feature type="compositionally biased region" description="Low complexity" evidence="4">
    <location>
        <begin position="368"/>
        <end position="397"/>
    </location>
</feature>
<feature type="modified residue" description="Phosphotyrosine" evidence="2">
    <location>
        <position position="92"/>
    </location>
</feature>
<feature type="modified residue" description="Phosphotyrosine" evidence="2">
    <location>
        <position position="164"/>
    </location>
</feature>
<feature type="modified residue" description="Phosphotyrosine" evidence="2">
    <location>
        <position position="166"/>
    </location>
</feature>
<feature type="modified residue" description="Phosphotyrosine" evidence="2">
    <location>
        <position position="177"/>
    </location>
</feature>
<feature type="modified residue" description="Phosphotyrosine" evidence="2">
    <location>
        <position position="189"/>
    </location>
</feature>
<feature type="modified residue" description="Phosphotyrosine" evidence="2">
    <location>
        <position position="214"/>
    </location>
</feature>
<feature type="modified residue" description="Phosphotyrosine" evidence="2">
    <location>
        <position position="223"/>
    </location>
</feature>
<feature type="modified residue" description="Phosphoserine" evidence="1">
    <location>
        <position position="296"/>
    </location>
</feature>
<feature type="modified residue" description="Phosphotyrosine" evidence="2">
    <location>
        <position position="317"/>
    </location>
</feature>
<feature type="modified residue" description="Phosphoserine" evidence="2">
    <location>
        <position position="369"/>
    </location>
</feature>
<feature type="modified residue" description="Phosphoserine" evidence="2">
    <location>
        <position position="780"/>
    </location>
</feature>
<feature type="modified residue" description="Phosphothreonine" evidence="2">
    <location>
        <position position="804"/>
    </location>
</feature>
<feature type="splice variant" id="VSP_061660" description="In isoform 2." evidence="5">
    <original>MWARNLMARALYDNVPECAEELAFRKGDILTVIEQNTGGLEGWWLCSLHGRQGIVPGNRVKLLIGPIQETPSGQDQPTSGLMHQTFGQQKLYQVPNPHSAPRDTIYQVPPSYQHQGIYQVPTSHGIQEQDVYQVPPSVQRSIGAANGPHLSK</original>
    <variation>MKY</variation>
    <location>
        <begin position="1"/>
        <end position="152"/>
    </location>
</feature>
<feature type="sequence conflict" description="In Ref. 1." evidence="7" ref="1">
    <original>WAR</original>
    <variation>KYK</variation>
    <location>
        <begin position="2"/>
        <end position="4"/>
    </location>
</feature>
<reference evidence="8" key="1">
    <citation type="journal article" date="2005" name="Nature">
        <title>Genome sequence, comparative analysis and haplotype structure of the domestic dog.</title>
        <authorList>
            <person name="Lindblad-Toh K."/>
            <person name="Wade C.M."/>
            <person name="Mikkelsen T.S."/>
            <person name="Karlsson E.K."/>
            <person name="Jaffe D.B."/>
            <person name="Kamal M."/>
            <person name="Clamp M."/>
            <person name="Chang J.L."/>
            <person name="Kulbokas E.J. III"/>
            <person name="Zody M.C."/>
            <person name="Mauceli E."/>
            <person name="Xie X."/>
            <person name="Breen M."/>
            <person name="Wayne R.K."/>
            <person name="Ostrander E.A."/>
            <person name="Ponting C.P."/>
            <person name="Galibert F."/>
            <person name="Smith D.R."/>
            <person name="deJong P.J."/>
            <person name="Kirkness E.F."/>
            <person name="Alvarez P."/>
            <person name="Biagi T."/>
            <person name="Brockman W."/>
            <person name="Butler J."/>
            <person name="Chin C.-W."/>
            <person name="Cook A."/>
            <person name="Cuff J."/>
            <person name="Daly M.J."/>
            <person name="DeCaprio D."/>
            <person name="Gnerre S."/>
            <person name="Grabherr M."/>
            <person name="Kellis M."/>
            <person name="Kleber M."/>
            <person name="Bardeleben C."/>
            <person name="Goodstadt L."/>
            <person name="Heger A."/>
            <person name="Hitte C."/>
            <person name="Kim L."/>
            <person name="Koepfli K.-P."/>
            <person name="Parker H.G."/>
            <person name="Pollinger J.P."/>
            <person name="Searle S.M.J."/>
            <person name="Sutter N.B."/>
            <person name="Thomas R."/>
            <person name="Webber C."/>
            <person name="Baldwin J."/>
            <person name="Abebe A."/>
            <person name="Abouelleil A."/>
            <person name="Aftuck L."/>
            <person name="Ait-Zahra M."/>
            <person name="Aldredge T."/>
            <person name="Allen N."/>
            <person name="An P."/>
            <person name="Anderson S."/>
            <person name="Antoine C."/>
            <person name="Arachchi H."/>
            <person name="Aslam A."/>
            <person name="Ayotte L."/>
            <person name="Bachantsang P."/>
            <person name="Barry A."/>
            <person name="Bayul T."/>
            <person name="Benamara M."/>
            <person name="Berlin A."/>
            <person name="Bessette D."/>
            <person name="Blitshteyn B."/>
            <person name="Bloom T."/>
            <person name="Blye J."/>
            <person name="Boguslavskiy L."/>
            <person name="Bonnet C."/>
            <person name="Boukhgalter B."/>
            <person name="Brown A."/>
            <person name="Cahill P."/>
            <person name="Calixte N."/>
            <person name="Camarata J."/>
            <person name="Cheshatsang Y."/>
            <person name="Chu J."/>
            <person name="Citroen M."/>
            <person name="Collymore A."/>
            <person name="Cooke P."/>
            <person name="Dawoe T."/>
            <person name="Daza R."/>
            <person name="Decktor K."/>
            <person name="DeGray S."/>
            <person name="Dhargay N."/>
            <person name="Dooley K."/>
            <person name="Dooley K."/>
            <person name="Dorje P."/>
            <person name="Dorjee K."/>
            <person name="Dorris L."/>
            <person name="Duffey N."/>
            <person name="Dupes A."/>
            <person name="Egbiremolen O."/>
            <person name="Elong R."/>
            <person name="Falk J."/>
            <person name="Farina A."/>
            <person name="Faro S."/>
            <person name="Ferguson D."/>
            <person name="Ferreira P."/>
            <person name="Fisher S."/>
            <person name="FitzGerald M."/>
            <person name="Foley K."/>
            <person name="Foley C."/>
            <person name="Franke A."/>
            <person name="Friedrich D."/>
            <person name="Gage D."/>
            <person name="Garber M."/>
            <person name="Gearin G."/>
            <person name="Giannoukos G."/>
            <person name="Goode T."/>
            <person name="Goyette A."/>
            <person name="Graham J."/>
            <person name="Grandbois E."/>
            <person name="Gyaltsen K."/>
            <person name="Hafez N."/>
            <person name="Hagopian D."/>
            <person name="Hagos B."/>
            <person name="Hall J."/>
            <person name="Healy C."/>
            <person name="Hegarty R."/>
            <person name="Honan T."/>
            <person name="Horn A."/>
            <person name="Houde N."/>
            <person name="Hughes L."/>
            <person name="Hunnicutt L."/>
            <person name="Husby M."/>
            <person name="Jester B."/>
            <person name="Jones C."/>
            <person name="Kamat A."/>
            <person name="Kanga B."/>
            <person name="Kells C."/>
            <person name="Khazanovich D."/>
            <person name="Kieu A.C."/>
            <person name="Kisner P."/>
            <person name="Kumar M."/>
            <person name="Lance K."/>
            <person name="Landers T."/>
            <person name="Lara M."/>
            <person name="Lee W."/>
            <person name="Leger J.-P."/>
            <person name="Lennon N."/>
            <person name="Leuper L."/>
            <person name="LeVine S."/>
            <person name="Liu J."/>
            <person name="Liu X."/>
            <person name="Lokyitsang Y."/>
            <person name="Lokyitsang T."/>
            <person name="Lui A."/>
            <person name="Macdonald J."/>
            <person name="Major J."/>
            <person name="Marabella R."/>
            <person name="Maru K."/>
            <person name="Matthews C."/>
            <person name="McDonough S."/>
            <person name="Mehta T."/>
            <person name="Meldrim J."/>
            <person name="Melnikov A."/>
            <person name="Meneus L."/>
            <person name="Mihalev A."/>
            <person name="Mihova T."/>
            <person name="Miller K."/>
            <person name="Mittelman R."/>
            <person name="Mlenga V."/>
            <person name="Mulrain L."/>
            <person name="Munson G."/>
            <person name="Navidi A."/>
            <person name="Naylor J."/>
            <person name="Nguyen T."/>
            <person name="Nguyen N."/>
            <person name="Nguyen C."/>
            <person name="Nguyen T."/>
            <person name="Nicol R."/>
            <person name="Norbu N."/>
            <person name="Norbu C."/>
            <person name="Novod N."/>
            <person name="Nyima T."/>
            <person name="Olandt P."/>
            <person name="O'Neill B."/>
            <person name="O'Neill K."/>
            <person name="Osman S."/>
            <person name="Oyono L."/>
            <person name="Patti C."/>
            <person name="Perrin D."/>
            <person name="Phunkhang P."/>
            <person name="Pierre F."/>
            <person name="Priest M."/>
            <person name="Rachupka A."/>
            <person name="Raghuraman S."/>
            <person name="Rameau R."/>
            <person name="Ray V."/>
            <person name="Raymond C."/>
            <person name="Rege F."/>
            <person name="Rise C."/>
            <person name="Rogers J."/>
            <person name="Rogov P."/>
            <person name="Sahalie J."/>
            <person name="Settipalli S."/>
            <person name="Sharpe T."/>
            <person name="Shea T."/>
            <person name="Sheehan M."/>
            <person name="Sherpa N."/>
            <person name="Shi J."/>
            <person name="Shih D."/>
            <person name="Sloan J."/>
            <person name="Smith C."/>
            <person name="Sparrow T."/>
            <person name="Stalker J."/>
            <person name="Stange-Thomann N."/>
            <person name="Stavropoulos S."/>
            <person name="Stone C."/>
            <person name="Stone S."/>
            <person name="Sykes S."/>
            <person name="Tchuinga P."/>
            <person name="Tenzing P."/>
            <person name="Tesfaye S."/>
            <person name="Thoulutsang D."/>
            <person name="Thoulutsang Y."/>
            <person name="Topham K."/>
            <person name="Topping I."/>
            <person name="Tsamla T."/>
            <person name="Vassiliev H."/>
            <person name="Venkataraman V."/>
            <person name="Vo A."/>
            <person name="Wangchuk T."/>
            <person name="Wangdi T."/>
            <person name="Weiand M."/>
            <person name="Wilkinson J."/>
            <person name="Wilson A."/>
            <person name="Yadav S."/>
            <person name="Yang S."/>
            <person name="Yang X."/>
            <person name="Young G."/>
            <person name="Yu Q."/>
            <person name="Zainoun J."/>
            <person name="Zembek L."/>
            <person name="Zimmer A."/>
            <person name="Lander E.S."/>
        </authorList>
    </citation>
    <scope>NUCLEOTIDE SEQUENCE [LARGE SCALE GENOMIC DNA]</scope>
    <source>
        <strain evidence="8">Boxer</strain>
    </source>
</reference>
<reference key="2">
    <citation type="journal article" date="2016" name="Cell Rep.">
        <title>SHIP2 Regulates Lumen Generation, Cell Division, and Ciliogenesis through the Control of Basolateral to Apical Lumen Localization of Aurora A and HEF 1.</title>
        <authorList>
            <person name="Hamze-Komaiha O."/>
            <person name="Sarr S."/>
            <person name="Arlot-Bonnemains Y."/>
            <person name="Samuel D."/>
            <person name="Gassama-Diagne A."/>
        </authorList>
    </citation>
    <scope>FUNCTION</scope>
    <scope>INTERACTION WITH INPPL1</scope>
    <scope>SUBCELLULAR LOCATION</scope>
</reference>
<name>CASL_CANLF</name>
<evidence type="ECO:0000250" key="1">
    <source>
        <dbReference type="UniProtKB" id="O35177"/>
    </source>
</evidence>
<evidence type="ECO:0000250" key="2">
    <source>
        <dbReference type="UniProtKB" id="Q14511"/>
    </source>
</evidence>
<evidence type="ECO:0000255" key="3">
    <source>
        <dbReference type="PROSITE-ProRule" id="PRU00192"/>
    </source>
</evidence>
<evidence type="ECO:0000256" key="4">
    <source>
        <dbReference type="SAM" id="MobiDB-lite"/>
    </source>
</evidence>
<evidence type="ECO:0000269" key="5">
    <source>
    </source>
</evidence>
<evidence type="ECO:0000269" key="6">
    <source>
    </source>
</evidence>
<evidence type="ECO:0000305" key="7"/>
<evidence type="ECO:0000312" key="8">
    <source>
        <dbReference type="Proteomes" id="UP000002254"/>
    </source>
</evidence>
<comment type="function">
    <text evidence="1 2 6">Negatively regulates embryonic fibroblast migration (By similarity). May play an important role in integrin beta-1 or B cell antigen receptor (BCR) mediated signaling in B- and T-cells. Integrin beta-1 stimulation leads to recruitment of various proteins including CRKl and SHPTP2 to the tyrosine phosphorylated form (By similarity). Promotes adhesion and migration of lymphocytes; as a result required for the correct migration of lymphocytes to the spleen and other secondary lymphoid organs (By similarity). Plays a role in the organization of T-cell F-actin cortical cytoskeleton and the centralization of T-cell receptor microclusters at the immunological synapse (By similarity). Negatively regulates cilia outgrowth in polarized cysts (PubMed:27926875). Modulates cilia disassembly via activation of AURKA-mediated phosphorylation of HDAC6 and subsequent deacetylation of alpha-tubulin (By similarity). In conjunction with NKX2-5, positively regulates transcription of genes such as COL3A1 and MMP2, resulting in increased pulmonary endothelial fibrosis in response to hypoxia (By similarity). Positively regulates RANKL-induced osteoclastogenesis (By similarity). Required for the maintenance of hippocampal dendritic spines in the dentate gyrus and CA1 regions, thereby involved in spatial learning and memory (By similarity).</text>
</comment>
<comment type="subunit">
    <text evidence="1 2 6">Homodimer (By similarity). Forms heterodimers with BCAR1/p130cas (By similarity). Forms complexes with PTK2B/RAFTK, adapter protein CRKL and LYN kinase (By similarity). Part of a complex composed of NEDD9, AURKA and CTTN; within the complex NEDD9 acts as a scaffold protein and is required for complex formation (By similarity). Part of a ternary complex composed of SMAD3, ITCH/AIP4 and NEDD9/HEF1; within the complex NEDD9/HEF1 interacts (via N-terminus) with ITCH/AIP4; the complex mediates ubiquitination and proteasomal degradation of NEDD9/HEF1 (By similarity). Interacts with ID2 (By similarity). Interacts with CTTN (via N-terminus) (By similarity). Interacts with MICAL (By similarity). Interacts with TXNL4/DIM1 (By similarity). Interacts with BCAR3 (via Ras-GEF domain) (By similarity). Interacts with SH2D3C isoform 1 and isoform 2 (By similarity). Interacts with BCAR3 (By similarity). Interacts with ECT2 (By similarity). Interacts with PTPN11/SHP-2 (via SH2 domains); the interaction is enhanced when NEDD9/CAS-L is tyrosine phosphorylated (By similarity). Interacts (via C-terminus) with PLK1 (via polo box domain) (By similarity). Interacts with NKX2-5 (By similarity). Interacts with SMAD3; the interaction is inhibited by oxidation of NEDD9 (By similarity). Interacts with ABL1; interaction is induced by CXCL12-mediated phosphorylation of NEDD/HEF1 (By similarity). Interacts (via SH3 domain) with PTK2/FAK (By similarity). Interacts with FYN; in the presence of PTK2 (By similarity). Interacts with INPPL1/SHIP2 (PubMed:27926875).</text>
</comment>
<comment type="subcellular location">
    <subcellularLocation>
        <location evidence="2">Cytoplasm</location>
        <location evidence="2">Cell cortex</location>
    </subcellularLocation>
    <subcellularLocation>
        <location evidence="2">Nucleus</location>
    </subcellularLocation>
    <subcellularLocation>
        <location evidence="2">Golgi apparatus</location>
    </subcellularLocation>
    <subcellularLocation>
        <location evidence="2">Cell projection</location>
        <location evidence="2">Lamellipodium</location>
    </subcellularLocation>
    <subcellularLocation>
        <location evidence="2">Cytoplasm</location>
    </subcellularLocation>
    <subcellularLocation>
        <location evidence="2">Cell junction</location>
        <location evidence="2">Focal adhesion</location>
    </subcellularLocation>
    <subcellularLocation>
        <location evidence="2">Cytoplasm</location>
        <location evidence="2">Cytoskeleton</location>
    </subcellularLocation>
    <subcellularLocation>
        <location evidence="6">Cytoplasm</location>
        <location evidence="6">Cytoskeleton</location>
        <location evidence="6">Spindle pole</location>
    </subcellularLocation>
    <subcellularLocation>
        <location evidence="2">Cell projection</location>
        <location evidence="2">Cilium</location>
    </subcellularLocation>
    <subcellularLocation>
        <location evidence="2">Cytoplasm</location>
        <location evidence="2">Cytoskeleton</location>
        <location evidence="2">Cilium basal body</location>
    </subcellularLocation>
    <subcellularLocation>
        <location evidence="6">Basolateral cell membrane</location>
    </subcellularLocation>
</comment>
<comment type="alternative products">
    <event type="alternative splicing"/>
    <isoform>
        <id>A0A8I3PDQ1-1</id>
        <name evidence="5">1</name>
        <sequence type="displayed"/>
    </isoform>
    <isoform>
        <id>A0A8I3PDQ1-2</id>
        <name evidence="5">2</name>
        <sequence type="described" ref="VSP_061660"/>
    </isoform>
</comment>
<comment type="domain">
    <text evidence="2">Contains a central domain containing multiple potential SH2-binding sites and a C-terminal domain containing a divergent helix-loop-helix (HLH) motif (By similarity). The SH2-binding sites putatively bind CRKL SH2 domains (By similarity). The HLH motif confers specific interaction with the HLH protein ID2 (By similarity). It is absolutely required for the induction of pseudohyphal growth in yeast and mediates homodimerization and heterodimerization with BCAR1/p130cas (By similarity).</text>
</comment>
<comment type="PTM">
    <text evidence="2">Polyubiquitinated by ITCH/AIP4, leading to proteasomal degradation.</text>
</comment>
<comment type="PTM">
    <text evidence="1 2">PTK2/FAK1 phosphorylates the protein at the YDYVHL motif (conserved among all cas proteins) following integrin stimulation (By similarity). The SRC family kinases (FYN, SRC, LCK and CRK) are recruited to the phosphorylated sites and can phosphorylate other tyrosine residues (By similarity). Ligation of either integrin beta-1 or B-cell antigen receptor on tonsillar B-cells and B-cell lines promotes tyrosine phosphorylation and both integrin and BCR-mediated tyrosine phosphorylation requires an intact actin network (By similarity). Phosphorylation is required to recruit NEDD9 to T-cell receptor microclusters at the periphery of newly formed immunological synapses (By similarity). In fibroblasts transformation with oncogene v-ABL results in an increase in tyrosine phosphorylation. Transiently phosphorylated following CD3 cross-linking and this phosphorylated form binds to CRKL and C3G (By similarity). A mutant lacking the SH3 domain is phosphorylated upon CD3 cross-linking but not upon integrin beta-1 cross-linking. Tyrosine phosphorylation occurs upon stimulation of the G-protein coupled C1a calcitonin receptor. Calcitonin-stimulated tyrosine phosphorylation is mediated by calcium- and protein kinase C-dependent mechanisms and requires the integrity of the actin cytoskeleton. Phosphorylation at Ser-369 induces proteasomal degradation (By similarity). Phosphorylated by LYN (By similarity). Phosphorylation at Ser-780 by CSNK1D or CSNK1E, or phosphorylation of Thr-804 by CSNK1E enhances the interaction of NEDD9 with PLK1 (By similarity).</text>
</comment>
<comment type="similarity">
    <text evidence="7">Belongs to the CAS family.</text>
</comment>
<protein>
    <recommendedName>
        <fullName evidence="2">Enhancer of filamentation 1</fullName>
    </recommendedName>
    <alternativeName>
        <fullName evidence="2">CRK-associated substrate-related protein</fullName>
        <shortName evidence="2">CAS-L</shortName>
    </alternativeName>
    <alternativeName>
        <fullName evidence="2">Neural precursor cell expressed developmentally down-regulated protein 9</fullName>
        <shortName evidence="2">NEDD-9</shortName>
    </alternativeName>
    <alternativeName>
        <fullName evidence="2">p105</fullName>
    </alternativeName>
</protein>
<sequence>MWARNLMARALYDNVPECAEELAFRKGDILTVIEQNTGGLEGWWLCSLHGRQGIVPGNRVKLLIGPIQETPSGQDQPTSGLMHQTFGQQKLYQVPNPHSAPRDTIYQVPPSYQHQGIYQVPTSHGIQEQDVYQVPPSVQRSIGAANGPHLSKKVVTPVRTGQGYVYEYPSRHQKDIYDIPPSHTTQGVYDIPPSSVKVPVFSLPVGEIKPQGVYDIPPTKGLYAIPPSACRDEAGLREKEYDFPPPMRQAGRLDVRPEGVYDIPPTSTKPTGKDLHIKYNCDAPGAAELATRRHQSVLLNHAPSQLGQSPGAQNDAYDVPRGVQFLEPPAETSEKANPEERDGVYDVPLHNPPDAKGSQDVVDGMNRLSFSSTGSTRSNMSTSSTTSKESSVSASPSQDKRLLLDPDTAIERLHRLQQTLEVGVSSLMALVTTDWRCYGYMDRHINEIRTSVDKVELFVRDYLHFARGAVANASCLPELTLHNKMKRELQRVEDSHQILSQTSHDLNECSWSLNILAVNKPQNKCDDLDRFVMVAKTVPDDAKQLTTTINTNAEALFRPGPGSSHVKSGSENIMNSTEYPHAASQMPLLHPGDHKAQGLNKPLPPSLGKDQPPDCSSSDGSERSWMDDYDYVHLQGKEEFERQQKELLEKENIIKQNKLQLEHHQLSQFQLLEQEITKPVENDISKWKPSQSLPTTNSSVGAQDRQLLCFYYDQCETHYISLLNAIDALFSCVSSAQPPRIFVAHSKFVILSAHKLVFIGDTLTRQVAAQDICHKVMNSSNQLCEQLKTIVMATKMAALHYPSTTALQEMVHQVTDLSRNAQLFKRSLLEMATF</sequence>
<organism evidence="8">
    <name type="scientific">Canis lupus familiaris</name>
    <name type="common">Dog</name>
    <name type="synonym">Canis familiaris</name>
    <dbReference type="NCBI Taxonomy" id="9615"/>
    <lineage>
        <taxon>Eukaryota</taxon>
        <taxon>Metazoa</taxon>
        <taxon>Chordata</taxon>
        <taxon>Craniata</taxon>
        <taxon>Vertebrata</taxon>
        <taxon>Euteleostomi</taxon>
        <taxon>Mammalia</taxon>
        <taxon>Eutheria</taxon>
        <taxon>Laurasiatheria</taxon>
        <taxon>Carnivora</taxon>
        <taxon>Caniformia</taxon>
        <taxon>Canidae</taxon>
        <taxon>Canis</taxon>
    </lineage>
</organism>
<dbReference type="RefSeq" id="XP_038302308.1">
    <molecule id="A0A8I3PDQ1-1"/>
    <property type="nucleotide sequence ID" value="XM_038446380.1"/>
</dbReference>
<dbReference type="SMR" id="A0A8I3PDQ1"/>
<dbReference type="FunCoup" id="A0A8I3PDQ1">
    <property type="interactions" value="556"/>
</dbReference>
<dbReference type="Ensembl" id="ENSCAFT00845036501.1">
    <molecule id="A0A8I3PDQ1-1"/>
    <property type="protein sequence ID" value="ENSCAFP00845028565.1"/>
    <property type="gene ID" value="ENSCAFG00845020672.1"/>
</dbReference>
<dbReference type="Ensembl" id="ENSCAFT00845036577.1">
    <molecule id="A0A8I3PDQ1-2"/>
    <property type="protein sequence ID" value="ENSCAFP00845028623.1"/>
    <property type="gene ID" value="ENSCAFG00845020672.1"/>
</dbReference>
<dbReference type="GeneID" id="488220"/>
<dbReference type="GeneTree" id="ENSGT00950000183008"/>
<dbReference type="OrthoDB" id="5983572at2759"/>
<dbReference type="Proteomes" id="UP000002254">
    <property type="component" value="Unplaced"/>
</dbReference>
<dbReference type="Proteomes" id="UP000694429">
    <property type="component" value="Unplaced"/>
</dbReference>
<dbReference type="Proteomes" id="UP000694542">
    <property type="component" value="Unplaced"/>
</dbReference>
<dbReference type="Proteomes" id="UP000805418">
    <property type="component" value="Chromosome 35"/>
</dbReference>
<dbReference type="GO" id="GO:0016323">
    <property type="term" value="C:basolateral plasma membrane"/>
    <property type="evidence" value="ECO:0000314"/>
    <property type="project" value="UniProtKB"/>
</dbReference>
<dbReference type="GO" id="GO:0005938">
    <property type="term" value="C:cell cortex"/>
    <property type="evidence" value="ECO:0007669"/>
    <property type="project" value="UniProtKB-SubCell"/>
</dbReference>
<dbReference type="GO" id="GO:0036064">
    <property type="term" value="C:ciliary basal body"/>
    <property type="evidence" value="ECO:0007669"/>
    <property type="project" value="Ensembl"/>
</dbReference>
<dbReference type="GO" id="GO:0005737">
    <property type="term" value="C:cytoplasm"/>
    <property type="evidence" value="ECO:0000318"/>
    <property type="project" value="GO_Central"/>
</dbReference>
<dbReference type="GO" id="GO:0005829">
    <property type="term" value="C:cytosol"/>
    <property type="evidence" value="ECO:0007669"/>
    <property type="project" value="Ensembl"/>
</dbReference>
<dbReference type="GO" id="GO:0005925">
    <property type="term" value="C:focal adhesion"/>
    <property type="evidence" value="ECO:0007669"/>
    <property type="project" value="UniProtKB-SubCell"/>
</dbReference>
<dbReference type="GO" id="GO:0005794">
    <property type="term" value="C:Golgi apparatus"/>
    <property type="evidence" value="ECO:0007669"/>
    <property type="project" value="UniProtKB-SubCell"/>
</dbReference>
<dbReference type="GO" id="GO:0001772">
    <property type="term" value="C:immunological synapse"/>
    <property type="evidence" value="ECO:0007669"/>
    <property type="project" value="Ensembl"/>
</dbReference>
<dbReference type="GO" id="GO:0030027">
    <property type="term" value="C:lamellipodium"/>
    <property type="evidence" value="ECO:0007669"/>
    <property type="project" value="UniProtKB-SubCell"/>
</dbReference>
<dbReference type="GO" id="GO:0072686">
    <property type="term" value="C:mitotic spindle"/>
    <property type="evidence" value="ECO:0007669"/>
    <property type="project" value="Ensembl"/>
</dbReference>
<dbReference type="GO" id="GO:0005654">
    <property type="term" value="C:nucleoplasm"/>
    <property type="evidence" value="ECO:0007669"/>
    <property type="project" value="Ensembl"/>
</dbReference>
<dbReference type="GO" id="GO:0000922">
    <property type="term" value="C:spindle pole"/>
    <property type="evidence" value="ECO:0000314"/>
    <property type="project" value="UniProtKB"/>
</dbReference>
<dbReference type="GO" id="GO:1990782">
    <property type="term" value="F:protein tyrosine kinase binding"/>
    <property type="evidence" value="ECO:0007669"/>
    <property type="project" value="Ensembl"/>
</dbReference>
<dbReference type="GO" id="GO:0007155">
    <property type="term" value="P:cell adhesion"/>
    <property type="evidence" value="ECO:0007669"/>
    <property type="project" value="UniProtKB-KW"/>
</dbReference>
<dbReference type="GO" id="GO:0051301">
    <property type="term" value="P:cell division"/>
    <property type="evidence" value="ECO:0007669"/>
    <property type="project" value="UniProtKB-KW"/>
</dbReference>
<dbReference type="GO" id="GO:0016477">
    <property type="term" value="P:cell migration"/>
    <property type="evidence" value="ECO:0000318"/>
    <property type="project" value="GO_Central"/>
</dbReference>
<dbReference type="GO" id="GO:0007169">
    <property type="term" value="P:cell surface receptor protein tyrosine kinase signaling pathway"/>
    <property type="evidence" value="ECO:0000318"/>
    <property type="project" value="GO_Central"/>
</dbReference>
<dbReference type="GO" id="GO:0061523">
    <property type="term" value="P:cilium disassembly"/>
    <property type="evidence" value="ECO:0007669"/>
    <property type="project" value="Ensembl"/>
</dbReference>
<dbReference type="GO" id="GO:0007611">
    <property type="term" value="P:learning or memory"/>
    <property type="evidence" value="ECO:0007669"/>
    <property type="project" value="Ensembl"/>
</dbReference>
<dbReference type="GO" id="GO:0097021">
    <property type="term" value="P:lymphocyte migration into lymphoid organs"/>
    <property type="evidence" value="ECO:0007669"/>
    <property type="project" value="Ensembl"/>
</dbReference>
<dbReference type="GO" id="GO:0030336">
    <property type="term" value="P:negative regulation of cell migration"/>
    <property type="evidence" value="ECO:0007669"/>
    <property type="project" value="Ensembl"/>
</dbReference>
<dbReference type="GO" id="GO:1902952">
    <property type="term" value="P:positive regulation of dendritic spine maintenance"/>
    <property type="evidence" value="ECO:0007669"/>
    <property type="project" value="Ensembl"/>
</dbReference>
<dbReference type="GO" id="GO:2000522">
    <property type="term" value="P:positive regulation of immunological synapse formation"/>
    <property type="evidence" value="ECO:0007669"/>
    <property type="project" value="Ensembl"/>
</dbReference>
<dbReference type="GO" id="GO:0140131">
    <property type="term" value="P:positive regulation of lymphocyte chemotaxis"/>
    <property type="evidence" value="ECO:0007669"/>
    <property type="project" value="Ensembl"/>
</dbReference>
<dbReference type="GO" id="GO:0045672">
    <property type="term" value="P:positive regulation of osteoclast differentiation"/>
    <property type="evidence" value="ECO:0007669"/>
    <property type="project" value="Ensembl"/>
</dbReference>
<dbReference type="GO" id="GO:1903829">
    <property type="term" value="P:positive regulation of protein localization"/>
    <property type="evidence" value="ECO:0007669"/>
    <property type="project" value="Ensembl"/>
</dbReference>
<dbReference type="GO" id="GO:1900026">
    <property type="term" value="P:positive regulation of substrate adhesion-dependent cell spreading"/>
    <property type="evidence" value="ECO:0007669"/>
    <property type="project" value="Ensembl"/>
</dbReference>
<dbReference type="GO" id="GO:0032956">
    <property type="term" value="P:regulation of actin cytoskeleton organization"/>
    <property type="evidence" value="ECO:0007669"/>
    <property type="project" value="Ensembl"/>
</dbReference>
<dbReference type="CDD" id="cd11570">
    <property type="entry name" value="FAT-like_NEDD9_C"/>
    <property type="match status" value="1"/>
</dbReference>
<dbReference type="CDD" id="cd11550">
    <property type="entry name" value="Serine_rich_NEDD9"/>
    <property type="match status" value="1"/>
</dbReference>
<dbReference type="CDD" id="cd12002">
    <property type="entry name" value="SH3_NEDD9"/>
    <property type="match status" value="1"/>
</dbReference>
<dbReference type="FunFam" id="1.20.120.230:FF:000001">
    <property type="entry name" value="Breast cancer anti-estrogen resistance 1"/>
    <property type="match status" value="1"/>
</dbReference>
<dbReference type="FunFam" id="2.30.30.40:FF:000009">
    <property type="entry name" value="Breast cancer anti-estrogen resistance 1"/>
    <property type="match status" value="1"/>
</dbReference>
<dbReference type="FunFam" id="1.20.120.830:FF:000002">
    <property type="entry name" value="Neural cell expressed, developmentally down-regulated 9"/>
    <property type="match status" value="1"/>
</dbReference>
<dbReference type="Gene3D" id="1.20.120.230">
    <property type="entry name" value="Alpha-catenin/vinculin-like"/>
    <property type="match status" value="1"/>
</dbReference>
<dbReference type="Gene3D" id="1.20.120.830">
    <property type="entry name" value="Serine-rich domain"/>
    <property type="match status" value="1"/>
</dbReference>
<dbReference type="Gene3D" id="2.30.30.40">
    <property type="entry name" value="SH3 Domains"/>
    <property type="match status" value="1"/>
</dbReference>
<dbReference type="InterPro" id="IPR021901">
    <property type="entry name" value="CAS_C"/>
</dbReference>
<dbReference type="InterPro" id="IPR037362">
    <property type="entry name" value="CAS_fam"/>
</dbReference>
<dbReference type="InterPro" id="IPR035746">
    <property type="entry name" value="NEDD9_SH3"/>
</dbReference>
<dbReference type="InterPro" id="IPR014928">
    <property type="entry name" value="Serine_rich_dom"/>
</dbReference>
<dbReference type="InterPro" id="IPR038319">
    <property type="entry name" value="Serine_rich_sf"/>
</dbReference>
<dbReference type="InterPro" id="IPR036028">
    <property type="entry name" value="SH3-like_dom_sf"/>
</dbReference>
<dbReference type="InterPro" id="IPR001452">
    <property type="entry name" value="SH3_domain"/>
</dbReference>
<dbReference type="PANTHER" id="PTHR10654">
    <property type="entry name" value="CAS SCAFFOLDING PROTEIN"/>
    <property type="match status" value="1"/>
</dbReference>
<dbReference type="PANTHER" id="PTHR10654:SF20">
    <property type="entry name" value="ENHANCER OF FILAMENTATION 1"/>
    <property type="match status" value="1"/>
</dbReference>
<dbReference type="Pfam" id="PF12026">
    <property type="entry name" value="CAS_C"/>
    <property type="match status" value="1"/>
</dbReference>
<dbReference type="Pfam" id="PF08824">
    <property type="entry name" value="Serine_rich"/>
    <property type="match status" value="1"/>
</dbReference>
<dbReference type="Pfam" id="PF14604">
    <property type="entry name" value="SH3_9"/>
    <property type="match status" value="1"/>
</dbReference>
<dbReference type="SMART" id="SM00326">
    <property type="entry name" value="SH3"/>
    <property type="match status" value="1"/>
</dbReference>
<dbReference type="SUPFAM" id="SSF50044">
    <property type="entry name" value="SH3-domain"/>
    <property type="match status" value="1"/>
</dbReference>
<dbReference type="PROSITE" id="PS50002">
    <property type="entry name" value="SH3"/>
    <property type="match status" value="1"/>
</dbReference>
<gene>
    <name evidence="2" type="primary">NEDD9</name>
    <name evidence="2" type="synonym">CASL</name>
</gene>
<keyword id="KW-0025">Alternative splicing</keyword>
<keyword id="KW-0130">Cell adhesion</keyword>
<keyword id="KW-0131">Cell cycle</keyword>
<keyword id="KW-0132">Cell division</keyword>
<keyword id="KW-0965">Cell junction</keyword>
<keyword id="KW-1003">Cell membrane</keyword>
<keyword id="KW-0966">Cell projection</keyword>
<keyword id="KW-0963">Cytoplasm</keyword>
<keyword id="KW-0206">Cytoskeleton</keyword>
<keyword id="KW-0333">Golgi apparatus</keyword>
<keyword id="KW-0341">Growth regulation</keyword>
<keyword id="KW-0472">Membrane</keyword>
<keyword id="KW-0498">Mitosis</keyword>
<keyword id="KW-0539">Nucleus</keyword>
<keyword id="KW-0597">Phosphoprotein</keyword>
<keyword id="KW-1185">Reference proteome</keyword>
<keyword id="KW-0728">SH3 domain</keyword>
<keyword id="KW-0832">Ubl conjugation</keyword>